<name>PBP2_STRPN</name>
<accession>P0A3M5</accession>
<accession>P10524</accession>
<comment type="function">
    <text evidence="1">A transpeptidase that forms peptide cross-links between adjacent glycan strands in cell wall peptidoglycan (PG). Part of the elongasome machinery that synthesizes peripheral PG.</text>
</comment>
<comment type="subunit">
    <text evidence="2">Interacts with MreC in the elongasome.</text>
</comment>
<comment type="subcellular location">
    <subcellularLocation>
        <location evidence="6">Cell membrane</location>
        <topology evidence="4">Single-pass membrane protein</topology>
    </subcellularLocation>
    <text evidence="1">Localizes to the midcell division sites, colocalizes with StkP.</text>
</comment>
<comment type="similarity">
    <text evidence="6">Belongs to the transpeptidase family.</text>
</comment>
<sequence>MRKFNSHSIPIRLNLLFSIVILLFMTIIGRLLYMQVLNKDFYEKKLASASQTKITSSSARGEIYDASGKPLVENTLKQVVSFTRSNKMTATDLKETAKKLLTYVSISSPNLTERQLADYYLADPEIYKKIVEALPSEKRLDSDGNRLSESELYNNAVDSVQTSQLNYTEDEKKEIYLFSQLNAVGNFATGTIATDPLNDSQVAVIASISKEMPGISISTSWDRKVLETSLSSIVGSVSSEKAGLPAEEAEAYLKKGYSLNDRVGTSYLEKQYEETLQGKRSVKEIHLDKYGNMESVDTIEEGSKGNNIKLTIDLAFQDSVDALLKSYFNSELENGGAKYSEGVYAVALNPKTGAVLSMSGIKHDLKTGELTPDSLGTVTNVFVPGSVVKAATISSGWENGVLSGNQTLTDQSIVFQGSAPINSWYTQAYGSFPITAVQALEYSSNTYMVQTALGLMGQTYQPNMFVGTSNLESAMEKLRSTFGEYGLGTATGIDLPDESTGFVPKEYSFANYITNAFGQFDNYTPMQLAQYVATIANNGVRVAPRIVEGIYGNNDKGGLGDLIQQLQPTEMNKVNISDSDMSILHQGFYQVAHGTSGLTTGRAFSNGALVSISGKTGTAESYVADGQQATNTNAVAYAPSDNPQIAVAVVFPHNTNLTNGVGPSIARDIINLYQKYHPMN</sequence>
<feature type="chain" id="PRO_0000195455" description="Penicillin-binding protein 2B">
    <location>
        <begin position="1"/>
        <end position="680"/>
    </location>
</feature>
<feature type="transmembrane region" description="Helical" evidence="4">
    <location>
        <begin position="9"/>
        <end position="29"/>
    </location>
</feature>
<feature type="active site" description="Acyl-ester intermediate" evidence="3">
    <location>
        <position position="386"/>
    </location>
</feature>
<feature type="sequence variant" description="In strain: 64147.">
    <original>E</original>
    <variation>G</variation>
    <location>
        <position position="333"/>
    </location>
</feature>
<feature type="sequence variant" description="In strain: 64147.">
    <original>TQAYGSF</original>
    <variation>PAFSRPM</variation>
    <location>
        <begin position="426"/>
        <end position="432"/>
    </location>
</feature>
<feature type="sequence variant" description="In strain: 64147.">
    <original>T</original>
    <variation>A</variation>
    <location>
        <position position="446"/>
    </location>
</feature>
<feature type="sequence variant" description="In strain: 64147.">
    <original>E</original>
    <variation>G</variation>
    <location>
        <position position="476"/>
    </location>
</feature>
<feature type="sequence variant" description="In strain: 64147.">
    <original>T</original>
    <variation>S</variation>
    <location>
        <position position="489"/>
    </location>
</feature>
<feature type="sequence variant" description="In strain: 64147.">
    <original>Y</original>
    <variation>F</variation>
    <location>
        <position position="512"/>
    </location>
</feature>
<feature type="sequence variant" description="In strain: 64147.">
    <original>N</original>
    <variation>D</variation>
    <location>
        <position position="538"/>
    </location>
</feature>
<feature type="sequence variant" description="In strain: 64147.">
    <original>G</original>
    <variation>E</variation>
    <location>
        <position position="597"/>
    </location>
</feature>
<feature type="sequence variant" description="In strain: 64147.">
    <original>QKY</original>
    <variation>NQH</variation>
    <location>
        <begin position="674"/>
        <end position="676"/>
    </location>
</feature>
<proteinExistence type="inferred from homology"/>
<reference key="1">
    <citation type="journal article" date="2001" name="Science">
        <title>Complete genome sequence of a virulent isolate of Streptococcus pneumoniae.</title>
        <authorList>
            <person name="Tettelin H."/>
            <person name="Nelson K.E."/>
            <person name="Paulsen I.T."/>
            <person name="Eisen J.A."/>
            <person name="Read T.D."/>
            <person name="Peterson S.N."/>
            <person name="Heidelberg J.F."/>
            <person name="DeBoy R.T."/>
            <person name="Haft D.H."/>
            <person name="Dodson R.J."/>
            <person name="Durkin A.S."/>
            <person name="Gwinn M.L."/>
            <person name="Kolonay J.F."/>
            <person name="Nelson W.C."/>
            <person name="Peterson J.D."/>
            <person name="Umayam L.A."/>
            <person name="White O."/>
            <person name="Salzberg S.L."/>
            <person name="Lewis M.R."/>
            <person name="Radune D."/>
            <person name="Holtzapple E.K."/>
            <person name="Khouri H.M."/>
            <person name="Wolf A.M."/>
            <person name="Utterback T.R."/>
            <person name="Hansen C.L."/>
            <person name="McDonald L.A."/>
            <person name="Feldblyum T.V."/>
            <person name="Angiuoli S.V."/>
            <person name="Dickinson T."/>
            <person name="Hickey E.K."/>
            <person name="Holt I.E."/>
            <person name="Loftus B.J."/>
            <person name="Yang F."/>
            <person name="Smith H.O."/>
            <person name="Venter J.C."/>
            <person name="Dougherty B.A."/>
            <person name="Morrison D.A."/>
            <person name="Hollingshead S.K."/>
            <person name="Fraser C.M."/>
        </authorList>
    </citation>
    <scope>NUCLEOTIDE SEQUENCE [LARGE SCALE GENOMIC DNA]</scope>
    <source>
        <strain>ATCC BAA-334 / TIGR4</strain>
    </source>
</reference>
<reference key="2">
    <citation type="journal article" date="1989" name="Mol. Microbiol.">
        <title>Extensive re-modelling of the transpeptidase domain of penicillin-binding protein 2B of a penicillin-resistant South African isolate of Streptococcus pneumoniae.</title>
        <authorList>
            <person name="Dowson C.G."/>
            <person name="Hutchison A."/>
            <person name="Spratt B.G."/>
        </authorList>
    </citation>
    <scope>NUCLEOTIDE SEQUENCE [GENOMIC DNA] OF 195-680</scope>
    <source>
        <strain>64147</strain>
    </source>
</reference>
<gene>
    <name evidence="5" type="primary">penA</name>
    <name type="synonym">pbp2b</name>
    <name type="ordered locus">SP_1673</name>
</gene>
<organism>
    <name type="scientific">Streptococcus pneumoniae serotype 4 (strain ATCC BAA-334 / TIGR4)</name>
    <dbReference type="NCBI Taxonomy" id="170187"/>
    <lineage>
        <taxon>Bacteria</taxon>
        <taxon>Bacillati</taxon>
        <taxon>Bacillota</taxon>
        <taxon>Bacilli</taxon>
        <taxon>Lactobacillales</taxon>
        <taxon>Streptococcaceae</taxon>
        <taxon>Streptococcus</taxon>
    </lineage>
</organism>
<keyword id="KW-0046">Antibiotic resistance</keyword>
<keyword id="KW-1003">Cell membrane</keyword>
<keyword id="KW-0133">Cell shape</keyword>
<keyword id="KW-0961">Cell wall biogenesis/degradation</keyword>
<keyword id="KW-0472">Membrane</keyword>
<keyword id="KW-0573">Peptidoglycan synthesis</keyword>
<keyword id="KW-1185">Reference proteome</keyword>
<keyword id="KW-0812">Transmembrane</keyword>
<keyword id="KW-1133">Transmembrane helix</keyword>
<evidence type="ECO:0000250" key="1">
    <source>
        <dbReference type="UniProtKB" id="A0A0H2ZQ75"/>
    </source>
</evidence>
<evidence type="ECO:0000250" key="2">
    <source>
        <dbReference type="UniProtKB" id="P0A3M6"/>
    </source>
</evidence>
<evidence type="ECO:0000250" key="3">
    <source>
        <dbReference type="UniProtKB" id="P0AD65"/>
    </source>
</evidence>
<evidence type="ECO:0000255" key="4"/>
<evidence type="ECO:0000303" key="5">
    <source>
    </source>
</evidence>
<evidence type="ECO:0000305" key="6"/>
<protein>
    <recommendedName>
        <fullName>Penicillin-binding protein 2B</fullName>
        <shortName>PBP2b</shortName>
    </recommendedName>
</protein>
<dbReference type="EMBL" id="AE005672">
    <property type="protein sequence ID" value="AAK75752.1"/>
    <property type="molecule type" value="Genomic_DNA"/>
</dbReference>
<dbReference type="EMBL" id="X13136">
    <property type="protein sequence ID" value="CAA31526.1"/>
    <property type="molecule type" value="Genomic_DNA"/>
</dbReference>
<dbReference type="PIR" id="B35965">
    <property type="entry name" value="B35965"/>
</dbReference>
<dbReference type="PIR" id="G95194">
    <property type="entry name" value="G95194"/>
</dbReference>
<dbReference type="SMR" id="P0A3M5"/>
<dbReference type="BindingDB" id="P0A3M5"/>
<dbReference type="ChEMBL" id="CHEMBL1255133"/>
<dbReference type="DrugBank" id="DB01150">
    <property type="generic name" value="Cefprozil"/>
</dbReference>
<dbReference type="DrugBank" id="DB05659">
    <property type="generic name" value="Faropenem medoxomil"/>
</dbReference>
<dbReference type="MEROPS" id="X52.001"/>
<dbReference type="PaxDb" id="170187-SP_1673"/>
<dbReference type="EnsemblBacteria" id="AAK75752">
    <property type="protein sequence ID" value="AAK75752"/>
    <property type="gene ID" value="SP_1673"/>
</dbReference>
<dbReference type="KEGG" id="spn:SP_1673"/>
<dbReference type="eggNOG" id="COG0768">
    <property type="taxonomic scope" value="Bacteria"/>
</dbReference>
<dbReference type="PhylomeDB" id="P0A3M5"/>
<dbReference type="BRENDA" id="2.4.1.129">
    <property type="organism ID" value="1960"/>
</dbReference>
<dbReference type="PRO" id="PR:P0A3M5"/>
<dbReference type="Proteomes" id="UP000000585">
    <property type="component" value="Chromosome"/>
</dbReference>
<dbReference type="GO" id="GO:0005886">
    <property type="term" value="C:plasma membrane"/>
    <property type="evidence" value="ECO:0007669"/>
    <property type="project" value="UniProtKB-SubCell"/>
</dbReference>
<dbReference type="GO" id="GO:0008658">
    <property type="term" value="F:penicillin binding"/>
    <property type="evidence" value="ECO:0007669"/>
    <property type="project" value="InterPro"/>
</dbReference>
<dbReference type="GO" id="GO:0071972">
    <property type="term" value="F:peptidoglycan L,D-transpeptidase activity"/>
    <property type="evidence" value="ECO:0007669"/>
    <property type="project" value="InterPro"/>
</dbReference>
<dbReference type="GO" id="GO:0071555">
    <property type="term" value="P:cell wall organization"/>
    <property type="evidence" value="ECO:0007669"/>
    <property type="project" value="UniProtKB-KW"/>
</dbReference>
<dbReference type="GO" id="GO:0009252">
    <property type="term" value="P:peptidoglycan biosynthetic process"/>
    <property type="evidence" value="ECO:0007669"/>
    <property type="project" value="UniProtKB-KW"/>
</dbReference>
<dbReference type="GO" id="GO:0008360">
    <property type="term" value="P:regulation of cell shape"/>
    <property type="evidence" value="ECO:0007669"/>
    <property type="project" value="UniProtKB-KW"/>
</dbReference>
<dbReference type="GO" id="GO:0046677">
    <property type="term" value="P:response to antibiotic"/>
    <property type="evidence" value="ECO:0007669"/>
    <property type="project" value="UniProtKB-KW"/>
</dbReference>
<dbReference type="FunFam" id="3.40.710.10:FF:000115">
    <property type="entry name" value="Penicillin-binding protein 2B"/>
    <property type="match status" value="1"/>
</dbReference>
<dbReference type="Gene3D" id="3.40.710.10">
    <property type="entry name" value="DD-peptidase/beta-lactamase superfamily"/>
    <property type="match status" value="1"/>
</dbReference>
<dbReference type="Gene3D" id="3.90.1310.10">
    <property type="entry name" value="Penicillin-binding protein 2a (Domain 2)"/>
    <property type="match status" value="1"/>
</dbReference>
<dbReference type="Gene3D" id="1.10.10.1230">
    <property type="entry name" value="Penicillin-binding protein, N-terminal non-catalytic domain, head sub-domain"/>
    <property type="match status" value="1"/>
</dbReference>
<dbReference type="InterPro" id="IPR050515">
    <property type="entry name" value="Bact_Transpept/Beta-Lactamase"/>
</dbReference>
<dbReference type="InterPro" id="IPR012338">
    <property type="entry name" value="Beta-lactam/transpept-like"/>
</dbReference>
<dbReference type="InterPro" id="IPR047982">
    <property type="entry name" value="PBP2B"/>
</dbReference>
<dbReference type="InterPro" id="IPR005311">
    <property type="entry name" value="PBP_dimer"/>
</dbReference>
<dbReference type="InterPro" id="IPR036138">
    <property type="entry name" value="PBP_dimer_sf"/>
</dbReference>
<dbReference type="InterPro" id="IPR001460">
    <property type="entry name" value="PCN-bd_Tpept"/>
</dbReference>
<dbReference type="NCBIfam" id="NF038278">
    <property type="entry name" value="strep_PBP2B"/>
    <property type="match status" value="1"/>
</dbReference>
<dbReference type="PANTHER" id="PTHR30627">
    <property type="entry name" value="PEPTIDOGLYCAN D,D-TRANSPEPTIDASE"/>
    <property type="match status" value="1"/>
</dbReference>
<dbReference type="PANTHER" id="PTHR30627:SF2">
    <property type="entry name" value="PEPTIDOGLYCAN D,D-TRANSPEPTIDASE MRDA"/>
    <property type="match status" value="1"/>
</dbReference>
<dbReference type="Pfam" id="PF03717">
    <property type="entry name" value="PBP_dimer"/>
    <property type="match status" value="1"/>
</dbReference>
<dbReference type="Pfam" id="PF00905">
    <property type="entry name" value="Transpeptidase"/>
    <property type="match status" value="1"/>
</dbReference>
<dbReference type="SUPFAM" id="SSF56601">
    <property type="entry name" value="beta-lactamase/transpeptidase-like"/>
    <property type="match status" value="1"/>
</dbReference>
<dbReference type="SUPFAM" id="SSF56519">
    <property type="entry name" value="Penicillin binding protein dimerisation domain"/>
    <property type="match status" value="1"/>
</dbReference>